<proteinExistence type="inferred from homology"/>
<organism>
    <name type="scientific">Prochlorococcus marinus (strain MIT 9312)</name>
    <dbReference type="NCBI Taxonomy" id="74546"/>
    <lineage>
        <taxon>Bacteria</taxon>
        <taxon>Bacillati</taxon>
        <taxon>Cyanobacteriota</taxon>
        <taxon>Cyanophyceae</taxon>
        <taxon>Synechococcales</taxon>
        <taxon>Prochlorococcaceae</taxon>
        <taxon>Prochlorococcus</taxon>
    </lineage>
</organism>
<feature type="chain" id="PRO_0000233536" description="Small ribosomal subunit protein uS17">
    <location>
        <begin position="1"/>
        <end position="88"/>
    </location>
</feature>
<evidence type="ECO:0000255" key="1">
    <source>
        <dbReference type="HAMAP-Rule" id="MF_01345"/>
    </source>
</evidence>
<evidence type="ECO:0000305" key="2"/>
<accession>Q318J3</accession>
<name>RS17_PROM9</name>
<comment type="function">
    <text evidence="1">One of the primary rRNA binding proteins, it binds specifically to the 5'-end of 16S ribosomal RNA.</text>
</comment>
<comment type="subunit">
    <text evidence="1">Part of the 30S ribosomal subunit.</text>
</comment>
<comment type="similarity">
    <text evidence="1">Belongs to the universal ribosomal protein uS17 family.</text>
</comment>
<reference key="1">
    <citation type="journal article" date="2006" name="Science">
        <title>Genomic islands and the ecology and evolution of Prochlorococcus.</title>
        <authorList>
            <person name="Coleman M.L."/>
            <person name="Sullivan M.B."/>
            <person name="Martiny A.C."/>
            <person name="Steglich C."/>
            <person name="Barry K."/>
            <person name="Delong E.F."/>
            <person name="Chisholm S.W."/>
        </authorList>
    </citation>
    <scope>NUCLEOTIDE SEQUENCE [LARGE SCALE GENOMIC DNA]</scope>
    <source>
        <strain>MIT 9312</strain>
    </source>
</reference>
<protein>
    <recommendedName>
        <fullName evidence="1">Small ribosomal subunit protein uS17</fullName>
    </recommendedName>
    <alternativeName>
        <fullName evidence="2">30S ribosomal protein S17</fullName>
    </alternativeName>
</protein>
<sequence>MALKERIGTVVSDKMDKTVVVAVINRYPHPTYKKIVSRTTRYKAHDPENTCALGDRVKIRETRPLSAHKRWAIQEILNKTSQTKEVKK</sequence>
<gene>
    <name evidence="1" type="primary">rpsQ</name>
    <name evidence="1" type="synonym">rps17</name>
    <name type="ordered locus">PMT9312_1642</name>
    <name type="ordered locus">PMT9312_1641</name>
</gene>
<dbReference type="EMBL" id="CP000111">
    <property type="protein sequence ID" value="ABB50702.1"/>
    <property type="molecule type" value="Genomic_DNA"/>
</dbReference>
<dbReference type="RefSeq" id="WP_011377183.1">
    <property type="nucleotide sequence ID" value="NC_007577.1"/>
</dbReference>
<dbReference type="SMR" id="Q318J3"/>
<dbReference type="STRING" id="74546.PMT9312_1641"/>
<dbReference type="KEGG" id="pmi:PMT9312_1641"/>
<dbReference type="eggNOG" id="COG0186">
    <property type="taxonomic scope" value="Bacteria"/>
</dbReference>
<dbReference type="HOGENOM" id="CLU_073626_1_2_3"/>
<dbReference type="OrthoDB" id="9811714at2"/>
<dbReference type="Proteomes" id="UP000002715">
    <property type="component" value="Chromosome"/>
</dbReference>
<dbReference type="GO" id="GO:0022627">
    <property type="term" value="C:cytosolic small ribosomal subunit"/>
    <property type="evidence" value="ECO:0007669"/>
    <property type="project" value="TreeGrafter"/>
</dbReference>
<dbReference type="GO" id="GO:0019843">
    <property type="term" value="F:rRNA binding"/>
    <property type="evidence" value="ECO:0007669"/>
    <property type="project" value="UniProtKB-UniRule"/>
</dbReference>
<dbReference type="GO" id="GO:0003735">
    <property type="term" value="F:structural constituent of ribosome"/>
    <property type="evidence" value="ECO:0007669"/>
    <property type="project" value="InterPro"/>
</dbReference>
<dbReference type="GO" id="GO:0006412">
    <property type="term" value="P:translation"/>
    <property type="evidence" value="ECO:0007669"/>
    <property type="project" value="UniProtKB-UniRule"/>
</dbReference>
<dbReference type="CDD" id="cd00364">
    <property type="entry name" value="Ribosomal_uS17"/>
    <property type="match status" value="1"/>
</dbReference>
<dbReference type="Gene3D" id="2.40.50.140">
    <property type="entry name" value="Nucleic acid-binding proteins"/>
    <property type="match status" value="1"/>
</dbReference>
<dbReference type="HAMAP" id="MF_01345_B">
    <property type="entry name" value="Ribosomal_uS17_B"/>
    <property type="match status" value="1"/>
</dbReference>
<dbReference type="InterPro" id="IPR012340">
    <property type="entry name" value="NA-bd_OB-fold"/>
</dbReference>
<dbReference type="InterPro" id="IPR000266">
    <property type="entry name" value="Ribosomal_uS17"/>
</dbReference>
<dbReference type="InterPro" id="IPR019984">
    <property type="entry name" value="Ribosomal_uS17_bact/chlr"/>
</dbReference>
<dbReference type="InterPro" id="IPR019979">
    <property type="entry name" value="Ribosomal_uS17_CS"/>
</dbReference>
<dbReference type="NCBIfam" id="NF004123">
    <property type="entry name" value="PRK05610.1"/>
    <property type="match status" value="1"/>
</dbReference>
<dbReference type="NCBIfam" id="TIGR03635">
    <property type="entry name" value="uS17_bact"/>
    <property type="match status" value="1"/>
</dbReference>
<dbReference type="PANTHER" id="PTHR10744">
    <property type="entry name" value="40S RIBOSOMAL PROTEIN S11 FAMILY MEMBER"/>
    <property type="match status" value="1"/>
</dbReference>
<dbReference type="PANTHER" id="PTHR10744:SF1">
    <property type="entry name" value="SMALL RIBOSOMAL SUBUNIT PROTEIN US17M"/>
    <property type="match status" value="1"/>
</dbReference>
<dbReference type="Pfam" id="PF00366">
    <property type="entry name" value="Ribosomal_S17"/>
    <property type="match status" value="1"/>
</dbReference>
<dbReference type="PRINTS" id="PR00973">
    <property type="entry name" value="RIBOSOMALS17"/>
</dbReference>
<dbReference type="SUPFAM" id="SSF50249">
    <property type="entry name" value="Nucleic acid-binding proteins"/>
    <property type="match status" value="1"/>
</dbReference>
<dbReference type="PROSITE" id="PS00056">
    <property type="entry name" value="RIBOSOMAL_S17"/>
    <property type="match status" value="1"/>
</dbReference>
<keyword id="KW-0687">Ribonucleoprotein</keyword>
<keyword id="KW-0689">Ribosomal protein</keyword>
<keyword id="KW-0694">RNA-binding</keyword>
<keyword id="KW-0699">rRNA-binding</keyword>